<name>NNRE_AJECG</name>
<accession>C0NNH7</accession>
<comment type="function">
    <text evidence="1">Catalyzes the epimerization of the S- and R-forms of NAD(P)HX, a damaged form of NAD(P)H that is a result of enzymatic or heat-dependent hydration. This is a prerequisite for the S-specific NAD(P)H-hydrate dehydratase to allow the repair of both epimers of NAD(P)HX.</text>
</comment>
<comment type="catalytic activity">
    <reaction>
        <text>(6R)-NADHX = (6S)-NADHX</text>
        <dbReference type="Rhea" id="RHEA:32215"/>
        <dbReference type="ChEBI" id="CHEBI:64074"/>
        <dbReference type="ChEBI" id="CHEBI:64075"/>
        <dbReference type="EC" id="5.1.99.6"/>
    </reaction>
</comment>
<comment type="catalytic activity">
    <reaction>
        <text>(6R)-NADPHX = (6S)-NADPHX</text>
        <dbReference type="Rhea" id="RHEA:32227"/>
        <dbReference type="ChEBI" id="CHEBI:64076"/>
        <dbReference type="ChEBI" id="CHEBI:64077"/>
        <dbReference type="EC" id="5.1.99.6"/>
    </reaction>
</comment>
<comment type="cofactor">
    <cofactor evidence="1">
        <name>K(+)</name>
        <dbReference type="ChEBI" id="CHEBI:29103"/>
    </cofactor>
    <text evidence="1">Binds 1 potassium ion per subunit.</text>
</comment>
<comment type="subcellular location">
    <subcellularLocation>
        <location evidence="1">Cytoplasm</location>
    </subcellularLocation>
    <subcellularLocation>
        <location evidence="1">Mitochondrion</location>
    </subcellularLocation>
</comment>
<comment type="similarity">
    <text evidence="1">Belongs to the NnrE/AIBP family.</text>
</comment>
<sequence>MTLRTINAKDAASLDRDLMNEGGFSLDQLMELAGLSVSQAVYRVHPPSKGRNVLVACGPGNNGGDGLVAARHLAHYGYKPTVYYPKQGKNELYERLKTQLHNLSVPFTSDFLGSLQTSDLVIDAIFGFSFSGPLRDPFPKVISLMEETQVPVLSVDAPSSWDIEAGPPKEGPGAKFMPQTLISLTAAKPLVKWFKGRHFLGGRFLTKGVVERYGLDIPEYPGVEQIVEVDVNGEGKL</sequence>
<reference key="1">
    <citation type="submission" date="2009-02" db="EMBL/GenBank/DDBJ databases">
        <title>The genome sequence of Ajellomyces capsulatus strain G186AR.</title>
        <authorList>
            <person name="Champion M."/>
            <person name="Cuomo C.A."/>
            <person name="Ma L.-J."/>
            <person name="Henn M.R."/>
            <person name="Sil A."/>
            <person name="Goldman B."/>
            <person name="Young S.K."/>
            <person name="Kodira C.D."/>
            <person name="Zeng Q."/>
            <person name="Koehrsen M."/>
            <person name="Alvarado L."/>
            <person name="Berlin A."/>
            <person name="Borenstein D."/>
            <person name="Chen Z."/>
            <person name="Engels R."/>
            <person name="Freedman E."/>
            <person name="Gellesch M."/>
            <person name="Goldberg J."/>
            <person name="Griggs A."/>
            <person name="Gujja S."/>
            <person name="Heiman D."/>
            <person name="Hepburn T."/>
            <person name="Howarth C."/>
            <person name="Jen D."/>
            <person name="Larson L."/>
            <person name="Lewis B."/>
            <person name="Mehta T."/>
            <person name="Park D."/>
            <person name="Pearson M."/>
            <person name="Roberts A."/>
            <person name="Saif S."/>
            <person name="Shea T."/>
            <person name="Shenoy N."/>
            <person name="Sisk P."/>
            <person name="Stolte C."/>
            <person name="Sykes S."/>
            <person name="Walk T."/>
            <person name="White J."/>
            <person name="Yandava C."/>
            <person name="Klein B."/>
            <person name="McEwen J.G."/>
            <person name="Puccia R."/>
            <person name="Goldman G.H."/>
            <person name="Felipe M.S."/>
            <person name="Nino-Vega G."/>
            <person name="San-Blas G."/>
            <person name="Taylor J."/>
            <person name="Mendoza L."/>
            <person name="Galagan J.E."/>
            <person name="Nusbaum C."/>
            <person name="Birren B.W."/>
        </authorList>
    </citation>
    <scope>NUCLEOTIDE SEQUENCE [LARGE SCALE GENOMIC DNA]</scope>
    <source>
        <strain>G186AR / H82 / ATCC MYA-2454 / RMSCC 2432</strain>
    </source>
</reference>
<dbReference type="EC" id="5.1.99.6"/>
<dbReference type="EMBL" id="GG663368">
    <property type="protein sequence ID" value="EEH06487.1"/>
    <property type="molecule type" value="Genomic_DNA"/>
</dbReference>
<dbReference type="RefSeq" id="XP_045286968.1">
    <property type="nucleotide sequence ID" value="XM_045431756.1"/>
</dbReference>
<dbReference type="SMR" id="C0NNH7"/>
<dbReference type="FunCoup" id="C0NNH7">
    <property type="interactions" value="232"/>
</dbReference>
<dbReference type="STRING" id="447093.C0NNH7"/>
<dbReference type="GeneID" id="69037723"/>
<dbReference type="VEuPathDB" id="FungiDB:I7I50_05258"/>
<dbReference type="HOGENOM" id="CLU_024853_3_0_1"/>
<dbReference type="InParanoid" id="C0NNH7"/>
<dbReference type="Proteomes" id="UP000001631">
    <property type="component" value="Unassembled WGS sequence"/>
</dbReference>
<dbReference type="GO" id="GO:0005739">
    <property type="term" value="C:mitochondrion"/>
    <property type="evidence" value="ECO:0007669"/>
    <property type="project" value="UniProtKB-SubCell"/>
</dbReference>
<dbReference type="GO" id="GO:0046872">
    <property type="term" value="F:metal ion binding"/>
    <property type="evidence" value="ECO:0007669"/>
    <property type="project" value="UniProtKB-KW"/>
</dbReference>
<dbReference type="GO" id="GO:0052856">
    <property type="term" value="F:NAD(P)HX epimerase activity"/>
    <property type="evidence" value="ECO:0007669"/>
    <property type="project" value="UniProtKB-UniRule"/>
</dbReference>
<dbReference type="GO" id="GO:0000166">
    <property type="term" value="F:nucleotide binding"/>
    <property type="evidence" value="ECO:0007669"/>
    <property type="project" value="UniProtKB-KW"/>
</dbReference>
<dbReference type="FunFam" id="3.40.50.10260:FF:000005">
    <property type="entry name" value="NAD(P)H-hydrate epimerase"/>
    <property type="match status" value="1"/>
</dbReference>
<dbReference type="Gene3D" id="3.40.50.10260">
    <property type="entry name" value="YjeF N-terminal domain"/>
    <property type="match status" value="1"/>
</dbReference>
<dbReference type="HAMAP" id="MF_01966">
    <property type="entry name" value="NADHX_epimerase"/>
    <property type="match status" value="1"/>
</dbReference>
<dbReference type="InterPro" id="IPR004443">
    <property type="entry name" value="YjeF_N_dom"/>
</dbReference>
<dbReference type="InterPro" id="IPR036652">
    <property type="entry name" value="YjeF_N_dom_sf"/>
</dbReference>
<dbReference type="InterPro" id="IPR032976">
    <property type="entry name" value="YJEFN_prot_NAXE-like"/>
</dbReference>
<dbReference type="NCBIfam" id="TIGR00197">
    <property type="entry name" value="yjeF_nterm"/>
    <property type="match status" value="1"/>
</dbReference>
<dbReference type="PANTHER" id="PTHR13232">
    <property type="entry name" value="NAD(P)H-HYDRATE EPIMERASE"/>
    <property type="match status" value="1"/>
</dbReference>
<dbReference type="PANTHER" id="PTHR13232:SF10">
    <property type="entry name" value="NAD(P)H-HYDRATE EPIMERASE"/>
    <property type="match status" value="1"/>
</dbReference>
<dbReference type="Pfam" id="PF03853">
    <property type="entry name" value="YjeF_N"/>
    <property type="match status" value="1"/>
</dbReference>
<dbReference type="SUPFAM" id="SSF64153">
    <property type="entry name" value="YjeF N-terminal domain-like"/>
    <property type="match status" value="1"/>
</dbReference>
<dbReference type="PROSITE" id="PS51385">
    <property type="entry name" value="YJEF_N"/>
    <property type="match status" value="1"/>
</dbReference>
<gene>
    <name type="ORF">HCBG_04707</name>
</gene>
<protein>
    <recommendedName>
        <fullName evidence="1">NAD(P)H-hydrate epimerase</fullName>
        <ecNumber>5.1.99.6</ecNumber>
    </recommendedName>
    <alternativeName>
        <fullName evidence="1">NAD(P)HX epimerase</fullName>
    </alternativeName>
</protein>
<organism>
    <name type="scientific">Ajellomyces capsulatus (strain G186AR / H82 / ATCC MYA-2454 / RMSCC 2432)</name>
    <name type="common">Darling's disease fungus</name>
    <name type="synonym">Histoplasma capsulatum</name>
    <dbReference type="NCBI Taxonomy" id="447093"/>
    <lineage>
        <taxon>Eukaryota</taxon>
        <taxon>Fungi</taxon>
        <taxon>Dikarya</taxon>
        <taxon>Ascomycota</taxon>
        <taxon>Pezizomycotina</taxon>
        <taxon>Eurotiomycetes</taxon>
        <taxon>Eurotiomycetidae</taxon>
        <taxon>Onygenales</taxon>
        <taxon>Ajellomycetaceae</taxon>
        <taxon>Histoplasma</taxon>
    </lineage>
</organism>
<evidence type="ECO:0000255" key="1">
    <source>
        <dbReference type="HAMAP-Rule" id="MF_03159"/>
    </source>
</evidence>
<feature type="chain" id="PRO_0000416330" description="NAD(P)H-hydrate epimerase">
    <location>
        <begin position="1"/>
        <end position="237"/>
    </location>
</feature>
<feature type="domain" description="YjeF N-terminal" evidence="1">
    <location>
        <begin position="11"/>
        <end position="223"/>
    </location>
</feature>
<feature type="binding site" evidence="1">
    <location>
        <begin position="61"/>
        <end position="65"/>
    </location>
    <ligand>
        <name>(6S)-NADPHX</name>
        <dbReference type="ChEBI" id="CHEBI:64076"/>
    </ligand>
</feature>
<feature type="binding site" evidence="1">
    <location>
        <position position="62"/>
    </location>
    <ligand>
        <name>K(+)</name>
        <dbReference type="ChEBI" id="CHEBI:29103"/>
    </ligand>
</feature>
<feature type="binding site" evidence="1">
    <location>
        <position position="123"/>
    </location>
    <ligand>
        <name>K(+)</name>
        <dbReference type="ChEBI" id="CHEBI:29103"/>
    </ligand>
</feature>
<feature type="binding site" evidence="1">
    <location>
        <begin position="127"/>
        <end position="133"/>
    </location>
    <ligand>
        <name>(6S)-NADPHX</name>
        <dbReference type="ChEBI" id="CHEBI:64076"/>
    </ligand>
</feature>
<feature type="binding site" evidence="1">
    <location>
        <position position="156"/>
    </location>
    <ligand>
        <name>(6S)-NADPHX</name>
        <dbReference type="ChEBI" id="CHEBI:64076"/>
    </ligand>
</feature>
<feature type="binding site" evidence="1">
    <location>
        <position position="159"/>
    </location>
    <ligand>
        <name>K(+)</name>
        <dbReference type="ChEBI" id="CHEBI:29103"/>
    </ligand>
</feature>
<keyword id="KW-0963">Cytoplasm</keyword>
<keyword id="KW-0413">Isomerase</keyword>
<keyword id="KW-0479">Metal-binding</keyword>
<keyword id="KW-0496">Mitochondrion</keyword>
<keyword id="KW-0520">NAD</keyword>
<keyword id="KW-0521">NADP</keyword>
<keyword id="KW-0547">Nucleotide-binding</keyword>
<keyword id="KW-0630">Potassium</keyword>
<keyword id="KW-1185">Reference proteome</keyword>
<proteinExistence type="inferred from homology"/>